<evidence type="ECO:0000255" key="1">
    <source>
        <dbReference type="HAMAP-Rule" id="MF_00255"/>
    </source>
</evidence>
<name>SYGB_CERS1</name>
<dbReference type="EC" id="6.1.1.14" evidence="1"/>
<dbReference type="EMBL" id="CP000577">
    <property type="protein sequence ID" value="ABN75623.1"/>
    <property type="molecule type" value="Genomic_DNA"/>
</dbReference>
<dbReference type="RefSeq" id="WP_011840400.1">
    <property type="nucleotide sequence ID" value="NC_009049.1"/>
</dbReference>
<dbReference type="SMR" id="A3PH07"/>
<dbReference type="KEGG" id="rsh:Rsph17029_0507"/>
<dbReference type="HOGENOM" id="CLU_007220_2_1_5"/>
<dbReference type="GO" id="GO:0005829">
    <property type="term" value="C:cytosol"/>
    <property type="evidence" value="ECO:0007669"/>
    <property type="project" value="TreeGrafter"/>
</dbReference>
<dbReference type="GO" id="GO:0004814">
    <property type="term" value="F:arginine-tRNA ligase activity"/>
    <property type="evidence" value="ECO:0007669"/>
    <property type="project" value="InterPro"/>
</dbReference>
<dbReference type="GO" id="GO:0005524">
    <property type="term" value="F:ATP binding"/>
    <property type="evidence" value="ECO:0007669"/>
    <property type="project" value="UniProtKB-UniRule"/>
</dbReference>
<dbReference type="GO" id="GO:0004820">
    <property type="term" value="F:glycine-tRNA ligase activity"/>
    <property type="evidence" value="ECO:0007669"/>
    <property type="project" value="UniProtKB-UniRule"/>
</dbReference>
<dbReference type="GO" id="GO:0006420">
    <property type="term" value="P:arginyl-tRNA aminoacylation"/>
    <property type="evidence" value="ECO:0007669"/>
    <property type="project" value="InterPro"/>
</dbReference>
<dbReference type="GO" id="GO:0006426">
    <property type="term" value="P:glycyl-tRNA aminoacylation"/>
    <property type="evidence" value="ECO:0007669"/>
    <property type="project" value="UniProtKB-UniRule"/>
</dbReference>
<dbReference type="HAMAP" id="MF_00255">
    <property type="entry name" value="Gly_tRNA_synth_beta"/>
    <property type="match status" value="1"/>
</dbReference>
<dbReference type="InterPro" id="IPR008909">
    <property type="entry name" value="DALR_anticod-bd"/>
</dbReference>
<dbReference type="InterPro" id="IPR015944">
    <property type="entry name" value="Gly-tRNA-synth_bsu"/>
</dbReference>
<dbReference type="InterPro" id="IPR006194">
    <property type="entry name" value="Gly-tRNA-synth_heterodimer"/>
</dbReference>
<dbReference type="NCBIfam" id="TIGR00211">
    <property type="entry name" value="glyS"/>
    <property type="match status" value="1"/>
</dbReference>
<dbReference type="PANTHER" id="PTHR30075:SF2">
    <property type="entry name" value="GLYCINE--TRNA LIGASE, CHLOROPLASTIC_MITOCHONDRIAL 2"/>
    <property type="match status" value="1"/>
</dbReference>
<dbReference type="PANTHER" id="PTHR30075">
    <property type="entry name" value="GLYCYL-TRNA SYNTHETASE"/>
    <property type="match status" value="1"/>
</dbReference>
<dbReference type="Pfam" id="PF05746">
    <property type="entry name" value="DALR_1"/>
    <property type="match status" value="1"/>
</dbReference>
<dbReference type="Pfam" id="PF02092">
    <property type="entry name" value="tRNA_synt_2f"/>
    <property type="match status" value="1"/>
</dbReference>
<dbReference type="PRINTS" id="PR01045">
    <property type="entry name" value="TRNASYNTHGB"/>
</dbReference>
<dbReference type="SUPFAM" id="SSF109604">
    <property type="entry name" value="HD-domain/PDEase-like"/>
    <property type="match status" value="1"/>
</dbReference>
<dbReference type="PROSITE" id="PS50861">
    <property type="entry name" value="AA_TRNA_LIGASE_II_GLYAB"/>
    <property type="match status" value="1"/>
</dbReference>
<sequence length="697" mass="75665">MPDLLIELFSEEIPARMQARAREDLKKLVTDGLVEAGLTYASAGAFSTPRRLVLSVEGLSAESPTLREERKGPKADAPAAAIEGFLRSTGLTRDRLETREDKKGAVLFAVVEKPGRPAPEIVAEVLERTIRTFPWPKSMRWGTGSLRWVRPLQSILCLLSDEGGAEVVPMTLDGLTAGNSTEGHRFMAPARFAVSGFEDYRAKLGRAFVMLDASEREQAIWHEATTQAFAQGLEVVPDAALLSEVAGLVEWPVVLMGAIGEDFLGLPPEVLQTSMREHQKFFSVTNPATGRIEKFVTVANRETADHGETILKGNGKVLSARLSDARFFWENDLRTVKTAGLEGMAEGLKQVTFHNRLGSQADRIARIEALAREIAPLVGASPDLAAEAARVAKADLQSAMVGEFPELQGTMGSYYARAAGLPEAVAQACKAHYQPLGPSDAVPTDPVSVAVALADKIDTLAGFWRIGEKPTGSKDPFALRRAALGVIRLLLTNNSRAGLMGIMLPAMNRHLEPFDTSDFTPYERELLSFFHDRLKVHLREQGIRHDVIDACLAMPGNDDLTLLVKRAEALSAFLKTDDGTNLLQGFKRANNILTQAEAKDGVEYSFGADPKFAETDAERALFAALETAEAAIGPALQAEDFAAAMSAMAALRAPIDAFFETVQVNADNAVLRRNRLNMLHSIRATCARVADLTRIEG</sequence>
<organism>
    <name type="scientific">Cereibacter sphaeroides (strain ATCC 17029 / ATH 2.4.9)</name>
    <name type="common">Rhodobacter sphaeroides</name>
    <dbReference type="NCBI Taxonomy" id="349101"/>
    <lineage>
        <taxon>Bacteria</taxon>
        <taxon>Pseudomonadati</taxon>
        <taxon>Pseudomonadota</taxon>
        <taxon>Alphaproteobacteria</taxon>
        <taxon>Rhodobacterales</taxon>
        <taxon>Paracoccaceae</taxon>
        <taxon>Cereibacter</taxon>
    </lineage>
</organism>
<protein>
    <recommendedName>
        <fullName evidence="1">Glycine--tRNA ligase beta subunit</fullName>
        <ecNumber evidence="1">6.1.1.14</ecNumber>
    </recommendedName>
    <alternativeName>
        <fullName evidence="1">Glycyl-tRNA synthetase beta subunit</fullName>
        <shortName evidence="1">GlyRS</shortName>
    </alternativeName>
</protein>
<feature type="chain" id="PRO_1000101325" description="Glycine--tRNA ligase beta subunit">
    <location>
        <begin position="1"/>
        <end position="697"/>
    </location>
</feature>
<proteinExistence type="inferred from homology"/>
<gene>
    <name evidence="1" type="primary">glyS</name>
    <name type="ordered locus">Rsph17029_0507</name>
</gene>
<comment type="catalytic activity">
    <reaction evidence="1">
        <text>tRNA(Gly) + glycine + ATP = glycyl-tRNA(Gly) + AMP + diphosphate</text>
        <dbReference type="Rhea" id="RHEA:16013"/>
        <dbReference type="Rhea" id="RHEA-COMP:9664"/>
        <dbReference type="Rhea" id="RHEA-COMP:9683"/>
        <dbReference type="ChEBI" id="CHEBI:30616"/>
        <dbReference type="ChEBI" id="CHEBI:33019"/>
        <dbReference type="ChEBI" id="CHEBI:57305"/>
        <dbReference type="ChEBI" id="CHEBI:78442"/>
        <dbReference type="ChEBI" id="CHEBI:78522"/>
        <dbReference type="ChEBI" id="CHEBI:456215"/>
        <dbReference type="EC" id="6.1.1.14"/>
    </reaction>
</comment>
<comment type="subunit">
    <text evidence="1">Tetramer of two alpha and two beta subunits.</text>
</comment>
<comment type="subcellular location">
    <subcellularLocation>
        <location evidence="1">Cytoplasm</location>
    </subcellularLocation>
</comment>
<comment type="similarity">
    <text evidence="1">Belongs to the class-II aminoacyl-tRNA synthetase family.</text>
</comment>
<accession>A3PH07</accession>
<keyword id="KW-0030">Aminoacyl-tRNA synthetase</keyword>
<keyword id="KW-0067">ATP-binding</keyword>
<keyword id="KW-0963">Cytoplasm</keyword>
<keyword id="KW-0436">Ligase</keyword>
<keyword id="KW-0547">Nucleotide-binding</keyword>
<keyword id="KW-0648">Protein biosynthesis</keyword>
<reference key="1">
    <citation type="submission" date="2007-02" db="EMBL/GenBank/DDBJ databases">
        <title>Complete sequence of chromosome 1 of Rhodobacter sphaeroides ATCC 17029.</title>
        <authorList>
            <person name="Copeland A."/>
            <person name="Lucas S."/>
            <person name="Lapidus A."/>
            <person name="Barry K."/>
            <person name="Detter J.C."/>
            <person name="Glavina del Rio T."/>
            <person name="Hammon N."/>
            <person name="Israni S."/>
            <person name="Dalin E."/>
            <person name="Tice H."/>
            <person name="Pitluck S."/>
            <person name="Kiss H."/>
            <person name="Brettin T."/>
            <person name="Bruce D."/>
            <person name="Han C."/>
            <person name="Tapia R."/>
            <person name="Gilna P."/>
            <person name="Schmutz J."/>
            <person name="Larimer F."/>
            <person name="Land M."/>
            <person name="Hauser L."/>
            <person name="Kyrpides N."/>
            <person name="Mikhailova N."/>
            <person name="Richardson P."/>
            <person name="Mackenzie C."/>
            <person name="Choudhary M."/>
            <person name="Donohue T.J."/>
            <person name="Kaplan S."/>
        </authorList>
    </citation>
    <scope>NUCLEOTIDE SEQUENCE [LARGE SCALE GENOMIC DNA]</scope>
    <source>
        <strain>ATCC 17029 / ATH 2.4.9</strain>
    </source>
</reference>